<protein>
    <recommendedName>
        <fullName>SpiC homolog</fullName>
    </recommendedName>
</protein>
<reference key="1">
    <citation type="journal article" date="2001" name="Nature">
        <title>Complete genome sequence of a multiple drug resistant Salmonella enterica serovar Typhi CT18.</title>
        <authorList>
            <person name="Parkhill J."/>
            <person name="Dougan G."/>
            <person name="James K.D."/>
            <person name="Thomson N.R."/>
            <person name="Pickard D."/>
            <person name="Wain J."/>
            <person name="Churcher C.M."/>
            <person name="Mungall K.L."/>
            <person name="Bentley S.D."/>
            <person name="Holden M.T.G."/>
            <person name="Sebaihia M."/>
            <person name="Baker S."/>
            <person name="Basham D."/>
            <person name="Brooks K."/>
            <person name="Chillingworth T."/>
            <person name="Connerton P."/>
            <person name="Cronin A."/>
            <person name="Davis P."/>
            <person name="Davies R.M."/>
            <person name="Dowd L."/>
            <person name="White N."/>
            <person name="Farrar J."/>
            <person name="Feltwell T."/>
            <person name="Hamlin N."/>
            <person name="Haque A."/>
            <person name="Hien T.T."/>
            <person name="Holroyd S."/>
            <person name="Jagels K."/>
            <person name="Krogh A."/>
            <person name="Larsen T.S."/>
            <person name="Leather S."/>
            <person name="Moule S."/>
            <person name="O'Gaora P."/>
            <person name="Parry C."/>
            <person name="Quail M.A."/>
            <person name="Rutherford K.M."/>
            <person name="Simmonds M."/>
            <person name="Skelton J."/>
            <person name="Stevens K."/>
            <person name="Whitehead S."/>
            <person name="Barrell B.G."/>
        </authorList>
    </citation>
    <scope>NUCLEOTIDE SEQUENCE [LARGE SCALE GENOMIC DNA]</scope>
    <source>
        <strain>CT18</strain>
    </source>
</reference>
<reference key="2">
    <citation type="journal article" date="2003" name="J. Bacteriol.">
        <title>Comparative genomics of Salmonella enterica serovar Typhi strains Ty2 and CT18.</title>
        <authorList>
            <person name="Deng W."/>
            <person name="Liou S.-R."/>
            <person name="Plunkett G. III"/>
            <person name="Mayhew G.F."/>
            <person name="Rose D.J."/>
            <person name="Burland V."/>
            <person name="Kodoyianni V."/>
            <person name="Schwartz D.C."/>
            <person name="Blattner F.R."/>
        </authorList>
    </citation>
    <scope>NUCLEOTIDE SEQUENCE [LARGE SCALE GENOMIC DNA]</scope>
    <source>
        <strain>ATCC 700931 / Ty2</strain>
    </source>
</reference>
<keyword id="KW-0843">Virulence</keyword>
<gene>
    <name type="primary">spiC</name>
    <name type="ordered locus">STY1727</name>
    <name type="ordered locus">t1261</name>
</gene>
<name>SPIC_SALTI</name>
<organism>
    <name type="scientific">Salmonella typhi</name>
    <dbReference type="NCBI Taxonomy" id="90370"/>
    <lineage>
        <taxon>Bacteria</taxon>
        <taxon>Pseudomonadati</taxon>
        <taxon>Pseudomonadota</taxon>
        <taxon>Gammaproteobacteria</taxon>
        <taxon>Enterobacterales</taxon>
        <taxon>Enterobacteriaceae</taxon>
        <taxon>Salmonella</taxon>
    </lineage>
</organism>
<sequence>MLAVLKGIPLIQDIRAEGNSRSWIMTIDGHPARGEIFSEAFSISLFLNDLESLPKPCLAYVTLLLAAHPDVHDYAIQLTADGGWLNGYYTTSSSSELIAIEIEKHLALTCILKNVIRNHHKLYSGGV</sequence>
<dbReference type="EMBL" id="AL513382">
    <property type="protein sequence ID" value="CAD01972.1"/>
    <property type="molecule type" value="Genomic_DNA"/>
</dbReference>
<dbReference type="EMBL" id="AE014613">
    <property type="protein sequence ID" value="AAO68913.1"/>
    <property type="molecule type" value="Genomic_DNA"/>
</dbReference>
<dbReference type="RefSeq" id="NP_456135.1">
    <property type="nucleotide sequence ID" value="NC_003198.1"/>
</dbReference>
<dbReference type="STRING" id="220341.gene:17585664"/>
<dbReference type="KEGG" id="stt:t1261"/>
<dbReference type="KEGG" id="sty:STY1727"/>
<dbReference type="PATRIC" id="fig|220341.7.peg.1737"/>
<dbReference type="eggNOG" id="ENOG50333WT">
    <property type="taxonomic scope" value="Bacteria"/>
</dbReference>
<dbReference type="HOGENOM" id="CLU_157272_0_0_6"/>
<dbReference type="OMA" id="HPDIHDY"/>
<dbReference type="Proteomes" id="UP000000541">
    <property type="component" value="Chromosome"/>
</dbReference>
<dbReference type="Proteomes" id="UP000002670">
    <property type="component" value="Chromosome"/>
</dbReference>
<dbReference type="NCBIfam" id="NF011895">
    <property type="entry name" value="PRK15368.1"/>
    <property type="match status" value="1"/>
</dbReference>
<feature type="chain" id="PRO_0000072125" description="SpiC homolog">
    <location>
        <begin position="1"/>
        <end position="127"/>
    </location>
</feature>
<comment type="function">
    <text evidence="1">Putative virulence protein.</text>
</comment>
<accession>Q8Z6L0</accession>
<evidence type="ECO:0000250" key="1"/>
<proteinExistence type="inferred from homology"/>